<comment type="similarity">
    <text evidence="1">Belongs to the UPF0223 family.</text>
</comment>
<organism>
    <name type="scientific">Staphylococcus aureus (strain MW2)</name>
    <dbReference type="NCBI Taxonomy" id="196620"/>
    <lineage>
        <taxon>Bacteria</taxon>
        <taxon>Bacillati</taxon>
        <taxon>Bacillota</taxon>
        <taxon>Bacilli</taxon>
        <taxon>Bacillales</taxon>
        <taxon>Staphylococcaceae</taxon>
        <taxon>Staphylococcus</taxon>
    </lineage>
</organism>
<feature type="chain" id="PRO_0000216688" description="UPF0223 protein MW0980">
    <location>
        <begin position="1"/>
        <end position="91"/>
    </location>
</feature>
<protein>
    <recommendedName>
        <fullName evidence="1">UPF0223 protein MW0980</fullName>
    </recommendedName>
</protein>
<reference key="1">
    <citation type="journal article" date="2002" name="Lancet">
        <title>Genome and virulence determinants of high virulence community-acquired MRSA.</title>
        <authorList>
            <person name="Baba T."/>
            <person name="Takeuchi F."/>
            <person name="Kuroda M."/>
            <person name="Yuzawa H."/>
            <person name="Aoki K."/>
            <person name="Oguchi A."/>
            <person name="Nagai Y."/>
            <person name="Iwama N."/>
            <person name="Asano K."/>
            <person name="Naimi T."/>
            <person name="Kuroda H."/>
            <person name="Cui L."/>
            <person name="Yamamoto K."/>
            <person name="Hiramatsu K."/>
        </authorList>
    </citation>
    <scope>NUCLEOTIDE SEQUENCE [LARGE SCALE GENOMIC DNA]</scope>
    <source>
        <strain>MW2</strain>
    </source>
</reference>
<accession>P67360</accession>
<accession>Q99V05</accession>
<dbReference type="EMBL" id="BA000033">
    <property type="protein sequence ID" value="BAB94845.1"/>
    <property type="molecule type" value="Genomic_DNA"/>
</dbReference>
<dbReference type="RefSeq" id="WP_000455597.1">
    <property type="nucleotide sequence ID" value="NC_003923.1"/>
</dbReference>
<dbReference type="SMR" id="P67360"/>
<dbReference type="KEGG" id="sam:MW0980"/>
<dbReference type="HOGENOM" id="CLU_166693_0_0_9"/>
<dbReference type="Gene3D" id="1.10.220.80">
    <property type="entry name" value="BH2638-like"/>
    <property type="match status" value="1"/>
</dbReference>
<dbReference type="HAMAP" id="MF_01041">
    <property type="entry name" value="UPF0223"/>
    <property type="match status" value="1"/>
</dbReference>
<dbReference type="InterPro" id="IPR023324">
    <property type="entry name" value="BH2638-like_sf"/>
</dbReference>
<dbReference type="InterPro" id="IPR007920">
    <property type="entry name" value="UPF0223"/>
</dbReference>
<dbReference type="NCBIfam" id="NF003353">
    <property type="entry name" value="PRK04387.1"/>
    <property type="match status" value="1"/>
</dbReference>
<dbReference type="Pfam" id="PF05256">
    <property type="entry name" value="UPF0223"/>
    <property type="match status" value="1"/>
</dbReference>
<dbReference type="PIRSF" id="PIRSF037260">
    <property type="entry name" value="UPF0223"/>
    <property type="match status" value="1"/>
</dbReference>
<dbReference type="SUPFAM" id="SSF158504">
    <property type="entry name" value="BH2638-like"/>
    <property type="match status" value="1"/>
</dbReference>
<name>Y980_STAAW</name>
<gene>
    <name type="ordered locus">MW0980</name>
</gene>
<proteinExistence type="inferred from homology"/>
<evidence type="ECO:0000255" key="1">
    <source>
        <dbReference type="HAMAP-Rule" id="MF_01041"/>
    </source>
</evidence>
<sequence>MEYEYPIDLDWSNEEMISVINFFNHVEKYYESGVTAGDFMGAYKRFKEIVPAKAEEKQIFNTFEKSSGYNSYKAVQDVKTHSEEQRVTAKK</sequence>